<name>SYF1_ASPFU</name>
<organism>
    <name type="scientific">Aspergillus fumigatus (strain ATCC MYA-4609 / CBS 101355 / FGSC A1100 / Af293)</name>
    <name type="common">Neosartorya fumigata</name>
    <dbReference type="NCBI Taxonomy" id="330879"/>
    <lineage>
        <taxon>Eukaryota</taxon>
        <taxon>Fungi</taxon>
        <taxon>Dikarya</taxon>
        <taxon>Ascomycota</taxon>
        <taxon>Pezizomycotina</taxon>
        <taxon>Eurotiomycetes</taxon>
        <taxon>Eurotiomycetidae</taxon>
        <taxon>Eurotiales</taxon>
        <taxon>Aspergillaceae</taxon>
        <taxon>Aspergillus</taxon>
        <taxon>Aspergillus subgen. Fumigati</taxon>
    </lineage>
</organism>
<sequence>MDRTAASRPDLYLIADQDTVYEQDLFRAPGSIKPWLAYIEYKQQNGTLYEQAFVMERACKQLPRSYKLWKMYLEFRINHLRGRNATKYRAEYQKVNALFERALILLNKMPKIWEMYLSFLLQQPLVTQTRRTFDRALRALPITQHNRIWKLYKAFARSASGQTAVKIWARYMQIHPENAEDYIELLVELGQYTEAVKRYMEILDDPRFQSKKGKSNFQLWTEMVDLLVSKAKQIRTGPQVGIDVDAILRSGIDRFADQRGKLWAGLATYWITKGNFEKARDVFEEGITTVMTVRDFTLIFDAYVEFEESIIGSLMEAAAVRADKGNVDEDADFDLDLRMLRFEQLMDRRPFLVNDVLLRQNPNNVIEWEKRVALWGDNKEEIVNTYTAAIAAINPKKAHGKFSELWVNYAKFYESGGDLDTARVIFDKAVKVPFKSVAELADTWCEWAEMELRSENFDKAVDIMAKATQAPKKSTVDYFDETLSPQQRVHKSWKLWSFYVDLVESVATLEETRKVYERIFELRIATPQTVVNYANLLEEHKYFEDSFKVYERGLDLFSYPVAFELWNLYLTKAVDRKIGIERLRDLFEQALDGCPPKFAKPLYLMYGNLEEERGLARHAMRIYERATRAVSDEDRFEMFEFYITKSASNFGLTSTRPIYERAIAALPDQEAKEMCLKFADMERRLGEIDRARAIYGHASQFCDPRTNAGFWQKWEAFEVQHGNEDTFKEMLRIKRSVQAQYNTDVNFIASQAIARSQQRAQEGAREREGEEAGTDASKERADAMAALERQARAPIGFVAASTGPEGGNRPPPPGQQQQPQPSAPVNPDAIDLDDDMDAE</sequence>
<protein>
    <recommendedName>
        <fullName>Pre-mRNA-splicing factor syf1</fullName>
    </recommendedName>
</protein>
<gene>
    <name type="primary">syf1</name>
    <name type="ORF">AFUA_5G11910</name>
</gene>
<dbReference type="EMBL" id="AAHF01000003">
    <property type="protein sequence ID" value="EAL91422.1"/>
    <property type="molecule type" value="Genomic_DNA"/>
</dbReference>
<dbReference type="RefSeq" id="XP_753460.1">
    <property type="nucleotide sequence ID" value="XM_748367.1"/>
</dbReference>
<dbReference type="SMR" id="Q4WVF4"/>
<dbReference type="FunCoup" id="Q4WVF4">
    <property type="interactions" value="1053"/>
</dbReference>
<dbReference type="STRING" id="330879.Q4WVF4"/>
<dbReference type="EnsemblFungi" id="EAL91422">
    <property type="protein sequence ID" value="EAL91422"/>
    <property type="gene ID" value="AFUA_5G11910"/>
</dbReference>
<dbReference type="GeneID" id="3511486"/>
<dbReference type="KEGG" id="afm:AFUA_5G11910"/>
<dbReference type="eggNOG" id="KOG2047">
    <property type="taxonomic scope" value="Eukaryota"/>
</dbReference>
<dbReference type="HOGENOM" id="CLU_007736_0_0_1"/>
<dbReference type="InParanoid" id="Q4WVF4"/>
<dbReference type="OMA" id="IWYNYLR"/>
<dbReference type="OrthoDB" id="10067343at2759"/>
<dbReference type="Proteomes" id="UP000002530">
    <property type="component" value="Chromosome 5"/>
</dbReference>
<dbReference type="GO" id="GO:0071014">
    <property type="term" value="C:post-mRNA release spliceosomal complex"/>
    <property type="evidence" value="ECO:0000318"/>
    <property type="project" value="GO_Central"/>
</dbReference>
<dbReference type="GO" id="GO:0000974">
    <property type="term" value="C:Prp19 complex"/>
    <property type="evidence" value="ECO:0000318"/>
    <property type="project" value="GO_Central"/>
</dbReference>
<dbReference type="GO" id="GO:0071007">
    <property type="term" value="C:U2-type catalytic step 2 spliceosome"/>
    <property type="evidence" value="ECO:0000318"/>
    <property type="project" value="GO_Central"/>
</dbReference>
<dbReference type="GO" id="GO:0000349">
    <property type="term" value="P:generation of catalytic spliceosome for first transesterification step"/>
    <property type="evidence" value="ECO:0000318"/>
    <property type="project" value="GO_Central"/>
</dbReference>
<dbReference type="GO" id="GO:0000398">
    <property type="term" value="P:mRNA splicing, via spliceosome"/>
    <property type="evidence" value="ECO:0000318"/>
    <property type="project" value="GO_Central"/>
</dbReference>
<dbReference type="FunFam" id="1.25.40.10:FF:000023">
    <property type="entry name" value="Pre-mRNA-splicing factor SYF1"/>
    <property type="match status" value="1"/>
</dbReference>
<dbReference type="FunFam" id="1.25.40.10:FF:000349">
    <property type="entry name" value="Putative Pre-mRNA-splicing factor syf1"/>
    <property type="match status" value="1"/>
</dbReference>
<dbReference type="FunFam" id="1.25.40.10:FF:000038">
    <property type="entry name" value="Putative pre-mRNA-splicing factor SYF1"/>
    <property type="match status" value="1"/>
</dbReference>
<dbReference type="Gene3D" id="1.25.40.10">
    <property type="entry name" value="Tetratricopeptide repeat domain"/>
    <property type="match status" value="4"/>
</dbReference>
<dbReference type="InterPro" id="IPR003107">
    <property type="entry name" value="HAT"/>
</dbReference>
<dbReference type="InterPro" id="IPR055433">
    <property type="entry name" value="HAT_Syf1-like_N"/>
</dbReference>
<dbReference type="InterPro" id="IPR056350">
    <property type="entry name" value="HAT_Syf1_central"/>
</dbReference>
<dbReference type="InterPro" id="IPR055430">
    <property type="entry name" value="HAT_Syf1_CNRKL1_C"/>
</dbReference>
<dbReference type="InterPro" id="IPR045075">
    <property type="entry name" value="Syf1-like"/>
</dbReference>
<dbReference type="InterPro" id="IPR011990">
    <property type="entry name" value="TPR-like_helical_dom_sf"/>
</dbReference>
<dbReference type="PANTHER" id="PTHR11246">
    <property type="entry name" value="PRE-MRNA SPLICING FACTOR"/>
    <property type="match status" value="1"/>
</dbReference>
<dbReference type="PANTHER" id="PTHR11246:SF5">
    <property type="entry name" value="PRE-MRNA-SPLICING FACTOR SYF1"/>
    <property type="match status" value="1"/>
</dbReference>
<dbReference type="Pfam" id="PF23231">
    <property type="entry name" value="HAT_Syf1_CNRKL1_C"/>
    <property type="match status" value="1"/>
</dbReference>
<dbReference type="Pfam" id="PF23233">
    <property type="entry name" value="HAT_Syf1_CNRKL1_N"/>
    <property type="match status" value="1"/>
</dbReference>
<dbReference type="Pfam" id="PF23220">
    <property type="entry name" value="HAT_Syf1_M"/>
    <property type="match status" value="1"/>
</dbReference>
<dbReference type="SMART" id="SM00386">
    <property type="entry name" value="HAT"/>
    <property type="match status" value="11"/>
</dbReference>
<dbReference type="SUPFAM" id="SSF48452">
    <property type="entry name" value="TPR-like"/>
    <property type="match status" value="2"/>
</dbReference>
<keyword id="KW-0507">mRNA processing</keyword>
<keyword id="KW-0508">mRNA splicing</keyword>
<keyword id="KW-0539">Nucleus</keyword>
<keyword id="KW-1185">Reference proteome</keyword>
<keyword id="KW-0677">Repeat</keyword>
<keyword id="KW-0747">Spliceosome</keyword>
<evidence type="ECO:0000250" key="1"/>
<evidence type="ECO:0000256" key="2">
    <source>
        <dbReference type="SAM" id="MobiDB-lite"/>
    </source>
</evidence>
<evidence type="ECO:0000305" key="3"/>
<reference key="1">
    <citation type="journal article" date="2005" name="Nature">
        <title>Genomic sequence of the pathogenic and allergenic filamentous fungus Aspergillus fumigatus.</title>
        <authorList>
            <person name="Nierman W.C."/>
            <person name="Pain A."/>
            <person name="Anderson M.J."/>
            <person name="Wortman J.R."/>
            <person name="Kim H.S."/>
            <person name="Arroyo J."/>
            <person name="Berriman M."/>
            <person name="Abe K."/>
            <person name="Archer D.B."/>
            <person name="Bermejo C."/>
            <person name="Bennett J.W."/>
            <person name="Bowyer P."/>
            <person name="Chen D."/>
            <person name="Collins M."/>
            <person name="Coulsen R."/>
            <person name="Davies R."/>
            <person name="Dyer P.S."/>
            <person name="Farman M.L."/>
            <person name="Fedorova N."/>
            <person name="Fedorova N.D."/>
            <person name="Feldblyum T.V."/>
            <person name="Fischer R."/>
            <person name="Fosker N."/>
            <person name="Fraser A."/>
            <person name="Garcia J.L."/>
            <person name="Garcia M.J."/>
            <person name="Goble A."/>
            <person name="Goldman G.H."/>
            <person name="Gomi K."/>
            <person name="Griffith-Jones S."/>
            <person name="Gwilliam R."/>
            <person name="Haas B.J."/>
            <person name="Haas H."/>
            <person name="Harris D.E."/>
            <person name="Horiuchi H."/>
            <person name="Huang J."/>
            <person name="Humphray S."/>
            <person name="Jimenez J."/>
            <person name="Keller N."/>
            <person name="Khouri H."/>
            <person name="Kitamoto K."/>
            <person name="Kobayashi T."/>
            <person name="Konzack S."/>
            <person name="Kulkarni R."/>
            <person name="Kumagai T."/>
            <person name="Lafton A."/>
            <person name="Latge J.-P."/>
            <person name="Li W."/>
            <person name="Lord A."/>
            <person name="Lu C."/>
            <person name="Majoros W.H."/>
            <person name="May G.S."/>
            <person name="Miller B.L."/>
            <person name="Mohamoud Y."/>
            <person name="Molina M."/>
            <person name="Monod M."/>
            <person name="Mouyna I."/>
            <person name="Mulligan S."/>
            <person name="Murphy L.D."/>
            <person name="O'Neil S."/>
            <person name="Paulsen I."/>
            <person name="Penalva M.A."/>
            <person name="Pertea M."/>
            <person name="Price C."/>
            <person name="Pritchard B.L."/>
            <person name="Quail M.A."/>
            <person name="Rabbinowitsch E."/>
            <person name="Rawlins N."/>
            <person name="Rajandream M.A."/>
            <person name="Reichard U."/>
            <person name="Renauld H."/>
            <person name="Robson G.D."/>
            <person name="Rodriguez de Cordoba S."/>
            <person name="Rodriguez-Pena J.M."/>
            <person name="Ronning C.M."/>
            <person name="Rutter S."/>
            <person name="Salzberg S.L."/>
            <person name="Sanchez M."/>
            <person name="Sanchez-Ferrero J.C."/>
            <person name="Saunders D."/>
            <person name="Seeger K."/>
            <person name="Squares R."/>
            <person name="Squares S."/>
            <person name="Takeuchi M."/>
            <person name="Tekaia F."/>
            <person name="Turner G."/>
            <person name="Vazquez de Aldana C.R."/>
            <person name="Weidman J."/>
            <person name="White O."/>
            <person name="Woodward J.R."/>
            <person name="Yu J.-H."/>
            <person name="Fraser C.M."/>
            <person name="Galagan J.E."/>
            <person name="Asai K."/>
            <person name="Machida M."/>
            <person name="Hall N."/>
            <person name="Barrell B.G."/>
            <person name="Denning D.W."/>
        </authorList>
    </citation>
    <scope>NUCLEOTIDE SEQUENCE [LARGE SCALE GENOMIC DNA]</scope>
    <source>
        <strain>ATCC MYA-4609 / CBS 101355 / FGSC A1100 / Af293</strain>
    </source>
</reference>
<feature type="chain" id="PRO_0000205726" description="Pre-mRNA-splicing factor syf1">
    <location>
        <begin position="1"/>
        <end position="839"/>
    </location>
</feature>
<feature type="repeat" description="HAT 1">
    <location>
        <begin position="12"/>
        <end position="44"/>
    </location>
</feature>
<feature type="repeat" description="HAT 2">
    <location>
        <begin position="46"/>
        <end position="78"/>
    </location>
</feature>
<feature type="repeat" description="HAT 3">
    <location>
        <begin position="90"/>
        <end position="122"/>
    </location>
</feature>
<feature type="repeat" description="HAT 4">
    <location>
        <begin position="124"/>
        <end position="158"/>
    </location>
</feature>
<feature type="repeat" description="HAT 5">
    <location>
        <begin position="274"/>
        <end position="309"/>
    </location>
</feature>
<feature type="repeat" description="HAT 6">
    <location>
        <begin position="377"/>
        <end position="415"/>
    </location>
</feature>
<feature type="repeat" description="HAT 7">
    <location>
        <begin position="417"/>
        <end position="453"/>
    </location>
</feature>
<feature type="repeat" description="HAT 8">
    <location>
        <begin position="470"/>
        <end position="502"/>
    </location>
</feature>
<feature type="repeat" description="HAT 9">
    <location>
        <begin position="507"/>
        <end position="539"/>
    </location>
</feature>
<feature type="repeat" description="HAT 10">
    <location>
        <begin position="541"/>
        <end position="575"/>
    </location>
</feature>
<feature type="repeat" description="HAT 11">
    <location>
        <begin position="578"/>
        <end position="612"/>
    </location>
</feature>
<feature type="repeat" description="HAT 12">
    <location>
        <begin position="650"/>
        <end position="684"/>
    </location>
</feature>
<feature type="repeat" description="HAT 13">
    <location>
        <begin position="686"/>
        <end position="720"/>
    </location>
</feature>
<feature type="region of interest" description="Disordered" evidence="2">
    <location>
        <begin position="758"/>
        <end position="839"/>
    </location>
</feature>
<feature type="compositionally biased region" description="Basic and acidic residues" evidence="2">
    <location>
        <begin position="762"/>
        <end position="782"/>
    </location>
</feature>
<feature type="compositionally biased region" description="Acidic residues" evidence="2">
    <location>
        <begin position="830"/>
        <end position="839"/>
    </location>
</feature>
<proteinExistence type="inferred from homology"/>
<accession>Q4WVF4</accession>
<comment type="function">
    <text evidence="1">Involved in pre-mRNA splicing and cell cycle progression.</text>
</comment>
<comment type="subunit">
    <text evidence="1">Associated with the spliceosome.</text>
</comment>
<comment type="subcellular location">
    <subcellularLocation>
        <location evidence="1">Nucleus</location>
    </subcellularLocation>
</comment>
<comment type="similarity">
    <text evidence="3">Belongs to the crooked-neck family.</text>
</comment>